<dbReference type="EMBL" id="U13675">
    <property type="protein sequence ID" value="AAA61795.1"/>
    <property type="molecule type" value="Genomic_DNA"/>
</dbReference>
<dbReference type="PIR" id="JC2544">
    <property type="entry name" value="JC2544"/>
</dbReference>
<dbReference type="SMR" id="P47234"/>
<dbReference type="STRING" id="1333848.CFNIH1_11750"/>
<dbReference type="GO" id="GO:0005886">
    <property type="term" value="C:plasma membrane"/>
    <property type="evidence" value="ECO:0007669"/>
    <property type="project" value="UniProtKB-SubCell"/>
</dbReference>
<dbReference type="GO" id="GO:0030395">
    <property type="term" value="F:lactose binding"/>
    <property type="evidence" value="ECO:0007669"/>
    <property type="project" value="TreeGrafter"/>
</dbReference>
<dbReference type="GO" id="GO:0015528">
    <property type="term" value="F:lactose:proton symporter activity"/>
    <property type="evidence" value="ECO:0007669"/>
    <property type="project" value="TreeGrafter"/>
</dbReference>
<dbReference type="CDD" id="cd06172">
    <property type="entry name" value="MFS_LacY"/>
    <property type="match status" value="1"/>
</dbReference>
<dbReference type="FunFam" id="1.20.1250.20:FF:000075">
    <property type="entry name" value="Lactose permease"/>
    <property type="match status" value="1"/>
</dbReference>
<dbReference type="Gene3D" id="1.20.1250.20">
    <property type="entry name" value="MFS general substrate transporter like domains"/>
    <property type="match status" value="2"/>
</dbReference>
<dbReference type="InterPro" id="IPR000576">
    <property type="entry name" value="LacY/RafB_perm_fam"/>
</dbReference>
<dbReference type="InterPro" id="IPR018457">
    <property type="entry name" value="LacY/RafB_perm_fam_CS"/>
</dbReference>
<dbReference type="InterPro" id="IPR020846">
    <property type="entry name" value="MFS_dom"/>
</dbReference>
<dbReference type="InterPro" id="IPR036259">
    <property type="entry name" value="MFS_trans_sf"/>
</dbReference>
<dbReference type="NCBIfam" id="TIGR00882">
    <property type="entry name" value="2A0105"/>
    <property type="match status" value="1"/>
</dbReference>
<dbReference type="NCBIfam" id="NF007077">
    <property type="entry name" value="PRK09528.1"/>
    <property type="match status" value="1"/>
</dbReference>
<dbReference type="PANTHER" id="PTHR23522:SF10">
    <property type="entry name" value="3-PHENYLPROPIONIC ACID TRANSPORTER-RELATED"/>
    <property type="match status" value="1"/>
</dbReference>
<dbReference type="PANTHER" id="PTHR23522">
    <property type="entry name" value="BLL5896 PROTEIN"/>
    <property type="match status" value="1"/>
</dbReference>
<dbReference type="Pfam" id="PF01306">
    <property type="entry name" value="LacY_symp"/>
    <property type="match status" value="1"/>
</dbReference>
<dbReference type="PRINTS" id="PR00174">
    <property type="entry name" value="LACYSMPORT"/>
</dbReference>
<dbReference type="SUPFAM" id="SSF103473">
    <property type="entry name" value="MFS general substrate transporter"/>
    <property type="match status" value="1"/>
</dbReference>
<dbReference type="PROSITE" id="PS00896">
    <property type="entry name" value="LACY_1"/>
    <property type="match status" value="1"/>
</dbReference>
<dbReference type="PROSITE" id="PS00897">
    <property type="entry name" value="LACY_2"/>
    <property type="match status" value="1"/>
</dbReference>
<dbReference type="PROSITE" id="PS50850">
    <property type="entry name" value="MFS"/>
    <property type="match status" value="1"/>
</dbReference>
<organism>
    <name type="scientific">Citrobacter freundii</name>
    <dbReference type="NCBI Taxonomy" id="546"/>
    <lineage>
        <taxon>Bacteria</taxon>
        <taxon>Pseudomonadati</taxon>
        <taxon>Pseudomonadota</taxon>
        <taxon>Gammaproteobacteria</taxon>
        <taxon>Enterobacterales</taxon>
        <taxon>Enterobacteriaceae</taxon>
        <taxon>Citrobacter</taxon>
        <taxon>Citrobacter freundii complex</taxon>
    </lineage>
</organism>
<protein>
    <recommendedName>
        <fullName>Lactose permease</fullName>
    </recommendedName>
    <alternativeName>
        <fullName>Lactose-proton symport</fullName>
    </alternativeName>
</protein>
<feature type="chain" id="PRO_0000196183" description="Lactose permease">
    <location>
        <begin position="1"/>
        <end position="416"/>
    </location>
</feature>
<feature type="topological domain" description="Cytoplasmic" evidence="3">
    <location>
        <begin position="1"/>
        <end position="13"/>
    </location>
</feature>
<feature type="transmembrane region" description="Helical" evidence="2">
    <location>
        <begin position="14"/>
        <end position="34"/>
    </location>
</feature>
<feature type="topological domain" description="Periplasmic" evidence="3">
    <location>
        <begin position="35"/>
        <end position="45"/>
    </location>
</feature>
<feature type="transmembrane region" description="Helical" evidence="2">
    <location>
        <begin position="46"/>
        <end position="66"/>
    </location>
</feature>
<feature type="topological domain" description="Cytoplasmic" evidence="3">
    <location>
        <begin position="67"/>
        <end position="75"/>
    </location>
</feature>
<feature type="transmembrane region" description="Helical" evidence="2">
    <location>
        <begin position="76"/>
        <end position="96"/>
    </location>
</feature>
<feature type="topological domain" description="Periplasmic" evidence="3">
    <location>
        <position position="97"/>
    </location>
</feature>
<feature type="transmembrane region" description="Helical" evidence="2">
    <location>
        <begin position="98"/>
        <end position="118"/>
    </location>
</feature>
<feature type="topological domain" description="Cytoplasmic" evidence="3">
    <location>
        <begin position="119"/>
        <end position="144"/>
    </location>
</feature>
<feature type="transmembrane region" description="Helical" evidence="2">
    <location>
        <begin position="145"/>
        <end position="165"/>
    </location>
</feature>
<feature type="topological domain" description="Periplasmic" evidence="3">
    <location>
        <position position="166"/>
    </location>
</feature>
<feature type="transmembrane region" description="Helical" evidence="2">
    <location>
        <begin position="167"/>
        <end position="187"/>
    </location>
</feature>
<feature type="topological domain" description="Cytoplasmic" evidence="3">
    <location>
        <begin position="188"/>
        <end position="211"/>
    </location>
</feature>
<feature type="transmembrane region" description="Helical" evidence="2">
    <location>
        <begin position="212"/>
        <end position="232"/>
    </location>
</feature>
<feature type="topological domain" description="Periplasmic" evidence="3">
    <location>
        <begin position="233"/>
        <end position="262"/>
    </location>
</feature>
<feature type="transmembrane region" description="Helical" evidence="2">
    <location>
        <begin position="263"/>
        <end position="283"/>
    </location>
</feature>
<feature type="topological domain" description="Cytoplasmic" evidence="3">
    <location>
        <begin position="284"/>
        <end position="290"/>
    </location>
</feature>
<feature type="transmembrane region" description="Helical" evidence="2">
    <location>
        <begin position="291"/>
        <end position="309"/>
    </location>
</feature>
<feature type="topological domain" description="Periplasmic" evidence="3">
    <location>
        <begin position="310"/>
        <end position="314"/>
    </location>
</feature>
<feature type="transmembrane region" description="Helical" evidence="2">
    <location>
        <begin position="315"/>
        <end position="336"/>
    </location>
</feature>
<feature type="topological domain" description="Cytoplasmic" evidence="3">
    <location>
        <begin position="337"/>
        <end position="347"/>
    </location>
</feature>
<feature type="transmembrane region" description="Helical" evidence="2">
    <location>
        <begin position="348"/>
        <end position="368"/>
    </location>
</feature>
<feature type="topological domain" description="Periplasmic" evidence="3">
    <location>
        <begin position="369"/>
        <end position="378"/>
    </location>
</feature>
<feature type="transmembrane region" description="Helical" evidence="2">
    <location>
        <begin position="379"/>
        <end position="399"/>
    </location>
</feature>
<feature type="topological domain" description="Cytoplasmic" evidence="3">
    <location>
        <begin position="400"/>
        <end position="416"/>
    </location>
</feature>
<feature type="site" description="Substrate binding" evidence="1">
    <location>
        <position position="126"/>
    </location>
</feature>
<feature type="site" description="Substrate binding" evidence="1">
    <location>
        <position position="144"/>
    </location>
</feature>
<feature type="site" description="Substrate binding and proton translocation" evidence="1">
    <location>
        <position position="269"/>
    </location>
</feature>
<feature type="site" description="Proton translocation" evidence="1">
    <location>
        <position position="302"/>
    </location>
</feature>
<feature type="site" description="Proton translocation" evidence="1">
    <location>
        <position position="321"/>
    </location>
</feature>
<feature type="site" description="Proton translocation" evidence="1">
    <location>
        <position position="324"/>
    </location>
</feature>
<proteinExistence type="inferred from homology"/>
<comment type="function">
    <text evidence="1">Responsible for transport of beta-galactosides into the cell, with the concomitant import of a proton (symport system).</text>
</comment>
<comment type="catalytic activity">
    <reaction evidence="1">
        <text>lactose(in) + H(+)(in) = lactose(out) + H(+)(out)</text>
        <dbReference type="Rhea" id="RHEA:28867"/>
        <dbReference type="ChEBI" id="CHEBI:15378"/>
        <dbReference type="ChEBI" id="CHEBI:17716"/>
    </reaction>
    <physiologicalReaction direction="right-to-left" evidence="1">
        <dbReference type="Rhea" id="RHEA:28869"/>
    </physiologicalReaction>
</comment>
<comment type="subcellular location">
    <subcellularLocation>
        <location evidence="1">Cell inner membrane</location>
        <topology evidence="1">Multi-pass membrane protein</topology>
    </subcellularLocation>
</comment>
<comment type="similarity">
    <text evidence="3">Belongs to the major facilitator superfamily. Oligosaccharide:H(+) symporter (OHS) (TC 2.A.1.5) family.</text>
</comment>
<name>LACY_CITFR</name>
<reference key="1">
    <citation type="journal article" date="1994" name="Biochem. Biophys. Res. Commun.">
        <title>Cloning and sequencing of the gene for the lactose carrier of Citrobacter freundii.</title>
        <authorList>
            <person name="Lee J.I."/>
            <person name="Okazaki N."/>
            <person name="Tsuchiya T."/>
            <person name="Wilson T.H."/>
        </authorList>
    </citation>
    <scope>NUCLEOTIDE SEQUENCE [GENOMIC DNA]</scope>
</reference>
<gene>
    <name type="primary">lacY</name>
</gene>
<evidence type="ECO:0000250" key="1">
    <source>
        <dbReference type="UniProtKB" id="P02920"/>
    </source>
</evidence>
<evidence type="ECO:0000255" key="2"/>
<evidence type="ECO:0000305" key="3"/>
<accession>P47234</accession>
<keyword id="KW-0997">Cell inner membrane</keyword>
<keyword id="KW-1003">Cell membrane</keyword>
<keyword id="KW-0472">Membrane</keyword>
<keyword id="KW-0762">Sugar transport</keyword>
<keyword id="KW-0769">Symport</keyword>
<keyword id="KW-0812">Transmembrane</keyword>
<keyword id="KW-1133">Transmembrane helix</keyword>
<keyword id="KW-0813">Transport</keyword>
<sequence>MYYLKNTNFWMFGFFFFFYFFIMGAYFPFFPIWLHEVNHISKGDTGIIFACISLFSLLFQPIFGLLSDKLGLRKHLLWVITGMLVMFAPFFIYVFGPLLQVNILLGSIVGGIYLGFIYNAGAPAIEAYIEKASRRSNFEFGRARMFGCVGWALCASIAGIMFTINNQFVFWLGSGCAVILALLLLFSKTDVPSSAKVADAVGANNSAFSLKLALELFKQPKLWLISLYVVGVSCTYDVFDQQFANFFTSFFATGEQGTRVFGYVTTMGELLNASIMFFAPLIVNRIGGKNALLLAGTIMSVRIIGSHSHTALEVVILKTLHMFEIPFLIVGCFKYITSQFEVRFSATIYLVCFCFFKQLAMIFMSVLAGKMYESIGFQGAYLVLGIIRVSFTLISVFTLSGPGPFSLLRRRESVAL</sequence>